<dbReference type="EC" id="7.1.1.-" evidence="1"/>
<dbReference type="EMBL" id="DQ887676">
    <property type="protein sequence ID" value="ABH88302.1"/>
    <property type="molecule type" value="Genomic_DNA"/>
</dbReference>
<dbReference type="RefSeq" id="YP_784391.1">
    <property type="nucleotide sequence ID" value="NC_008456.1"/>
</dbReference>
<dbReference type="SMR" id="Q06GZ2"/>
<dbReference type="GeneID" id="4363538"/>
<dbReference type="GO" id="GO:0009535">
    <property type="term" value="C:chloroplast thylakoid membrane"/>
    <property type="evidence" value="ECO:0007669"/>
    <property type="project" value="UniProtKB-SubCell"/>
</dbReference>
<dbReference type="GO" id="GO:0030964">
    <property type="term" value="C:NADH dehydrogenase complex"/>
    <property type="evidence" value="ECO:0007669"/>
    <property type="project" value="TreeGrafter"/>
</dbReference>
<dbReference type="GO" id="GO:0008137">
    <property type="term" value="F:NADH dehydrogenase (ubiquinone) activity"/>
    <property type="evidence" value="ECO:0007669"/>
    <property type="project" value="InterPro"/>
</dbReference>
<dbReference type="GO" id="GO:0048038">
    <property type="term" value="F:quinone binding"/>
    <property type="evidence" value="ECO:0007669"/>
    <property type="project" value="UniProtKB-KW"/>
</dbReference>
<dbReference type="GO" id="GO:0019684">
    <property type="term" value="P:photosynthesis, light reaction"/>
    <property type="evidence" value="ECO:0007669"/>
    <property type="project" value="UniProtKB-UniRule"/>
</dbReference>
<dbReference type="FunFam" id="1.20.58.1610:FF:000001">
    <property type="entry name" value="NAD(P)H-quinone oxidoreductase subunit 3, chloroplastic"/>
    <property type="match status" value="1"/>
</dbReference>
<dbReference type="Gene3D" id="1.20.58.1610">
    <property type="entry name" value="NADH:ubiquinone/plastoquinone oxidoreductase, chain 3"/>
    <property type="match status" value="1"/>
</dbReference>
<dbReference type="HAMAP" id="MF_01394">
    <property type="entry name" value="NDH1_NuoA"/>
    <property type="match status" value="1"/>
</dbReference>
<dbReference type="InterPro" id="IPR023043">
    <property type="entry name" value="NAD(P)H_OxRDtase_bac/plastid"/>
</dbReference>
<dbReference type="InterPro" id="IPR000440">
    <property type="entry name" value="NADH_UbQ/plastoQ_OxRdtase_su3"/>
</dbReference>
<dbReference type="InterPro" id="IPR038430">
    <property type="entry name" value="NDAH_ubi_oxred_su3_sf"/>
</dbReference>
<dbReference type="PANTHER" id="PTHR11058">
    <property type="entry name" value="NADH-UBIQUINONE OXIDOREDUCTASE CHAIN 3"/>
    <property type="match status" value="1"/>
</dbReference>
<dbReference type="PANTHER" id="PTHR11058:SF9">
    <property type="entry name" value="NADH-UBIQUINONE OXIDOREDUCTASE CHAIN 3"/>
    <property type="match status" value="1"/>
</dbReference>
<dbReference type="Pfam" id="PF00507">
    <property type="entry name" value="Oxidored_q4"/>
    <property type="match status" value="1"/>
</dbReference>
<geneLocation type="chloroplast"/>
<organism>
    <name type="scientific">Drimys granadensis</name>
    <dbReference type="NCBI Taxonomy" id="224735"/>
    <lineage>
        <taxon>Eukaryota</taxon>
        <taxon>Viridiplantae</taxon>
        <taxon>Streptophyta</taxon>
        <taxon>Embryophyta</taxon>
        <taxon>Tracheophyta</taxon>
        <taxon>Spermatophyta</taxon>
        <taxon>Magnoliopsida</taxon>
        <taxon>Magnoliidae</taxon>
        <taxon>Canellales</taxon>
        <taxon>Winteraceae</taxon>
        <taxon>Drimys</taxon>
    </lineage>
</organism>
<protein>
    <recommendedName>
        <fullName evidence="1">NAD(P)H-quinone oxidoreductase subunit 3, chloroplastic</fullName>
        <ecNumber evidence="1">7.1.1.-</ecNumber>
    </recommendedName>
    <alternativeName>
        <fullName evidence="1">NAD(P)H dehydrogenase subunit 3</fullName>
    </alternativeName>
    <alternativeName>
        <fullName evidence="1">NADH-plastoquinone oxidoreductase subunit 3</fullName>
    </alternativeName>
</protein>
<reference key="1">
    <citation type="journal article" date="2006" name="BMC Evol. Biol.">
        <title>Complete plastid genome sequences of Drimys, Liriodendron, and Piper: implications for the phylogenetic relationships of magnoliids.</title>
        <authorList>
            <person name="Cai Z."/>
            <person name="Penaflor C."/>
            <person name="Kuehl J.V."/>
            <person name="Leebens-Mack J."/>
            <person name="Carlson J.E."/>
            <person name="dePamphilis C.W."/>
            <person name="Boore J.L."/>
            <person name="Jansen R.K."/>
        </authorList>
    </citation>
    <scope>NUCLEOTIDE SEQUENCE [LARGE SCALE GENOMIC DNA]</scope>
</reference>
<proteinExistence type="inferred from homology"/>
<comment type="function">
    <text evidence="1">NDH shuttles electrons from NAD(P)H:plastoquinone, via FMN and iron-sulfur (Fe-S) centers, to quinones in the photosynthetic chain and possibly in a chloroplast respiratory chain. The immediate electron acceptor for the enzyme in this species is believed to be plastoquinone. Couples the redox reaction to proton translocation, and thus conserves the redox energy in a proton gradient.</text>
</comment>
<comment type="catalytic activity">
    <reaction evidence="1">
        <text>a plastoquinone + NADH + (n+1) H(+)(in) = a plastoquinol + NAD(+) + n H(+)(out)</text>
        <dbReference type="Rhea" id="RHEA:42608"/>
        <dbReference type="Rhea" id="RHEA-COMP:9561"/>
        <dbReference type="Rhea" id="RHEA-COMP:9562"/>
        <dbReference type="ChEBI" id="CHEBI:15378"/>
        <dbReference type="ChEBI" id="CHEBI:17757"/>
        <dbReference type="ChEBI" id="CHEBI:57540"/>
        <dbReference type="ChEBI" id="CHEBI:57945"/>
        <dbReference type="ChEBI" id="CHEBI:62192"/>
    </reaction>
</comment>
<comment type="catalytic activity">
    <reaction evidence="1">
        <text>a plastoquinone + NADPH + (n+1) H(+)(in) = a plastoquinol + NADP(+) + n H(+)(out)</text>
        <dbReference type="Rhea" id="RHEA:42612"/>
        <dbReference type="Rhea" id="RHEA-COMP:9561"/>
        <dbReference type="Rhea" id="RHEA-COMP:9562"/>
        <dbReference type="ChEBI" id="CHEBI:15378"/>
        <dbReference type="ChEBI" id="CHEBI:17757"/>
        <dbReference type="ChEBI" id="CHEBI:57783"/>
        <dbReference type="ChEBI" id="CHEBI:58349"/>
        <dbReference type="ChEBI" id="CHEBI:62192"/>
    </reaction>
</comment>
<comment type="subunit">
    <text evidence="1">NDH is composed of at least 16 different subunits, 5 of which are encoded in the nucleus.</text>
</comment>
<comment type="subcellular location">
    <subcellularLocation>
        <location evidence="1">Plastid</location>
        <location evidence="1">Chloroplast thylakoid membrane</location>
        <topology evidence="1">Multi-pass membrane protein</topology>
    </subcellularLocation>
</comment>
<comment type="similarity">
    <text evidence="1">Belongs to the complex I subunit 3 family.</text>
</comment>
<accession>Q06GZ2</accession>
<evidence type="ECO:0000255" key="1">
    <source>
        <dbReference type="HAMAP-Rule" id="MF_01394"/>
    </source>
</evidence>
<gene>
    <name evidence="1" type="primary">ndhC</name>
</gene>
<keyword id="KW-0150">Chloroplast</keyword>
<keyword id="KW-0472">Membrane</keyword>
<keyword id="KW-0520">NAD</keyword>
<keyword id="KW-0521">NADP</keyword>
<keyword id="KW-0934">Plastid</keyword>
<keyword id="KW-0618">Plastoquinone</keyword>
<keyword id="KW-0874">Quinone</keyword>
<keyword id="KW-0793">Thylakoid</keyword>
<keyword id="KW-1278">Translocase</keyword>
<keyword id="KW-0812">Transmembrane</keyword>
<keyword id="KW-1133">Transmembrane helix</keyword>
<keyword id="KW-0813">Transport</keyword>
<feature type="chain" id="PRO_0000362831" description="NAD(P)H-quinone oxidoreductase subunit 3, chloroplastic">
    <location>
        <begin position="1"/>
        <end position="120"/>
    </location>
</feature>
<feature type="transmembrane region" description="Helical" evidence="1">
    <location>
        <begin position="9"/>
        <end position="29"/>
    </location>
</feature>
<feature type="transmembrane region" description="Helical" evidence="1">
    <location>
        <begin position="64"/>
        <end position="84"/>
    </location>
</feature>
<feature type="transmembrane region" description="Helical" evidence="1">
    <location>
        <begin position="88"/>
        <end position="108"/>
    </location>
</feature>
<sequence length="120" mass="13781">MFLLYEYDIFWAFLIISSLIPILAFLISGVLAPISEGPEKLSSYESGIEPMGDAWLQFRIRYYMFALVFVVFDVETVFLYPWAMSFDVLGVSVFIEALIFVLIPIIGSVYAWRKGALEWS</sequence>
<name>NU3C_DRIGR</name>